<comment type="function">
    <text evidence="1">Functions as a transcriptional repressor. May repress OTX2-mediated transactivation by forming a heterodimer with OTX2 on the P3C (5'-TAATCCGATTA-3') sequence. Required for brain development (By similarity).</text>
</comment>
<comment type="subunit">
    <text evidence="3">Homodimer or heterodimer. Forms heterodimers with OTX2 (By similarity).</text>
</comment>
<comment type="subcellular location">
    <subcellularLocation>
        <location evidence="2 4 5">Nucleus</location>
    </subcellularLocation>
</comment>
<comment type="alternative products">
    <event type="alternative splicing"/>
    <isoform>
        <id>Q8NFW5-1</id>
        <name evidence="8">1</name>
        <name evidence="14">MBX-L</name>
        <sequence type="displayed"/>
    </isoform>
    <isoform>
        <id>Q8NFW5-2</id>
        <name evidence="7 8">2</name>
        <name evidence="13">MBX-S</name>
        <sequence type="described" ref="VSP_052251"/>
    </isoform>
</comment>
<comment type="similarity">
    <text evidence="12">Belongs to the paired homeobox family.</text>
</comment>
<comment type="sequence caution" evidence="12">
    <conflict type="erroneous initiation">
        <sequence resource="EMBL-CDS" id="BAC00920"/>
    </conflict>
    <text>Extended N-terminus.</text>
</comment>
<gene>
    <name evidence="17" type="primary">DMBX1</name>
    <name evidence="11" type="synonym">MBX</name>
    <name type="synonym">OTX3</name>
    <name evidence="16" type="synonym">PAXB</name>
</gene>
<proteinExistence type="evidence at protein level"/>
<reference evidence="12 14" key="1">
    <citation type="journal article" date="2002" name="Dev. Biol.">
        <title>The homeobox gene mbx is involved in eye and tectum development.</title>
        <authorList>
            <person name="Kawahara A."/>
            <person name="Chien C.-B."/>
            <person name="Dawid I.B."/>
        </authorList>
    </citation>
    <scope>NUCLEOTIDE SEQUENCE [MRNA] (ISOFORMS 1 AND 2)</scope>
    <source>
        <tissue evidence="8">Fetus</tissue>
    </source>
</reference>
<reference evidence="12 16" key="2">
    <citation type="journal article" date="2002" name="J. Biol. Chem.">
        <title>Identification, tissue expression, and functional characterization of Otx3, a novel member of the Otx family.</title>
        <authorList>
            <person name="Zhang Y."/>
            <person name="Miki T."/>
            <person name="Iwanaga T."/>
            <person name="Koseki Y."/>
            <person name="Okuno M."/>
            <person name="Sunaga Y."/>
            <person name="Ozaki N."/>
            <person name="Yano H."/>
            <person name="Koseki H."/>
            <person name="Seino S."/>
        </authorList>
    </citation>
    <scope>NUCLEOTIDE SEQUENCE [MRNA] (ISOFORM 2)</scope>
    <source>
        <tissue evidence="7">Fetal brain</tissue>
    </source>
</reference>
<reference evidence="15" key="3">
    <citation type="journal article" date="2006" name="Nature">
        <title>The DNA sequence and biological annotation of human chromosome 1.</title>
        <authorList>
            <person name="Gregory S.G."/>
            <person name="Barlow K.F."/>
            <person name="McLay K.E."/>
            <person name="Kaul R."/>
            <person name="Swarbreck D."/>
            <person name="Dunham A."/>
            <person name="Scott C.E."/>
            <person name="Howe K.L."/>
            <person name="Woodfine K."/>
            <person name="Spencer C.C.A."/>
            <person name="Jones M.C."/>
            <person name="Gillson C."/>
            <person name="Searle S."/>
            <person name="Zhou Y."/>
            <person name="Kokocinski F."/>
            <person name="McDonald L."/>
            <person name="Evans R."/>
            <person name="Phillips K."/>
            <person name="Atkinson A."/>
            <person name="Cooper R."/>
            <person name="Jones C."/>
            <person name="Hall R.E."/>
            <person name="Andrews T.D."/>
            <person name="Lloyd C."/>
            <person name="Ainscough R."/>
            <person name="Almeida J.P."/>
            <person name="Ambrose K.D."/>
            <person name="Anderson F."/>
            <person name="Andrew R.W."/>
            <person name="Ashwell R.I.S."/>
            <person name="Aubin K."/>
            <person name="Babbage A.K."/>
            <person name="Bagguley C.L."/>
            <person name="Bailey J."/>
            <person name="Beasley H."/>
            <person name="Bethel G."/>
            <person name="Bird C.P."/>
            <person name="Bray-Allen S."/>
            <person name="Brown J.Y."/>
            <person name="Brown A.J."/>
            <person name="Buckley D."/>
            <person name="Burton J."/>
            <person name="Bye J."/>
            <person name="Carder C."/>
            <person name="Chapman J.C."/>
            <person name="Clark S.Y."/>
            <person name="Clarke G."/>
            <person name="Clee C."/>
            <person name="Cobley V."/>
            <person name="Collier R.E."/>
            <person name="Corby N."/>
            <person name="Coville G.J."/>
            <person name="Davies J."/>
            <person name="Deadman R."/>
            <person name="Dunn M."/>
            <person name="Earthrowl M."/>
            <person name="Ellington A.G."/>
            <person name="Errington H."/>
            <person name="Frankish A."/>
            <person name="Frankland J."/>
            <person name="French L."/>
            <person name="Garner P."/>
            <person name="Garnett J."/>
            <person name="Gay L."/>
            <person name="Ghori M.R.J."/>
            <person name="Gibson R."/>
            <person name="Gilby L.M."/>
            <person name="Gillett W."/>
            <person name="Glithero R.J."/>
            <person name="Grafham D.V."/>
            <person name="Griffiths C."/>
            <person name="Griffiths-Jones S."/>
            <person name="Grocock R."/>
            <person name="Hammond S."/>
            <person name="Harrison E.S.I."/>
            <person name="Hart E."/>
            <person name="Haugen E."/>
            <person name="Heath P.D."/>
            <person name="Holmes S."/>
            <person name="Holt K."/>
            <person name="Howden P.J."/>
            <person name="Hunt A.R."/>
            <person name="Hunt S.E."/>
            <person name="Hunter G."/>
            <person name="Isherwood J."/>
            <person name="James R."/>
            <person name="Johnson C."/>
            <person name="Johnson D."/>
            <person name="Joy A."/>
            <person name="Kay M."/>
            <person name="Kershaw J.K."/>
            <person name="Kibukawa M."/>
            <person name="Kimberley A.M."/>
            <person name="King A."/>
            <person name="Knights A.J."/>
            <person name="Lad H."/>
            <person name="Laird G."/>
            <person name="Lawlor S."/>
            <person name="Leongamornlert D.A."/>
            <person name="Lloyd D.M."/>
            <person name="Loveland J."/>
            <person name="Lovell J."/>
            <person name="Lush M.J."/>
            <person name="Lyne R."/>
            <person name="Martin S."/>
            <person name="Mashreghi-Mohammadi M."/>
            <person name="Matthews L."/>
            <person name="Matthews N.S.W."/>
            <person name="McLaren S."/>
            <person name="Milne S."/>
            <person name="Mistry S."/>
            <person name="Moore M.J.F."/>
            <person name="Nickerson T."/>
            <person name="O'Dell C.N."/>
            <person name="Oliver K."/>
            <person name="Palmeiri A."/>
            <person name="Palmer S.A."/>
            <person name="Parker A."/>
            <person name="Patel D."/>
            <person name="Pearce A.V."/>
            <person name="Peck A.I."/>
            <person name="Pelan S."/>
            <person name="Phelps K."/>
            <person name="Phillimore B.J."/>
            <person name="Plumb R."/>
            <person name="Rajan J."/>
            <person name="Raymond C."/>
            <person name="Rouse G."/>
            <person name="Saenphimmachak C."/>
            <person name="Sehra H.K."/>
            <person name="Sheridan E."/>
            <person name="Shownkeen R."/>
            <person name="Sims S."/>
            <person name="Skuce C.D."/>
            <person name="Smith M."/>
            <person name="Steward C."/>
            <person name="Subramanian S."/>
            <person name="Sycamore N."/>
            <person name="Tracey A."/>
            <person name="Tromans A."/>
            <person name="Van Helmond Z."/>
            <person name="Wall M."/>
            <person name="Wallis J.M."/>
            <person name="White S."/>
            <person name="Whitehead S.L."/>
            <person name="Wilkinson J.E."/>
            <person name="Willey D.L."/>
            <person name="Williams H."/>
            <person name="Wilming L."/>
            <person name="Wray P.W."/>
            <person name="Wu Z."/>
            <person name="Coulson A."/>
            <person name="Vaudin M."/>
            <person name="Sulston J.E."/>
            <person name="Durbin R.M."/>
            <person name="Hubbard T."/>
            <person name="Wooster R."/>
            <person name="Dunham I."/>
            <person name="Carter N.P."/>
            <person name="McVean G."/>
            <person name="Ross M.T."/>
            <person name="Harrow J."/>
            <person name="Olson M.V."/>
            <person name="Beck S."/>
            <person name="Rogers J."/>
            <person name="Bentley D.R."/>
        </authorList>
    </citation>
    <scope>NUCLEOTIDE SEQUENCE [LARGE SCALE GENOMIC DNA]</scope>
</reference>
<reference key="4">
    <citation type="submission" date="2005-09" db="EMBL/GenBank/DDBJ databases">
        <authorList>
            <person name="Mural R.J."/>
            <person name="Istrail S."/>
            <person name="Sutton G.G."/>
            <person name="Florea L."/>
            <person name="Halpern A.L."/>
            <person name="Mobarry C.M."/>
            <person name="Lippert R."/>
            <person name="Walenz B."/>
            <person name="Shatkay H."/>
            <person name="Dew I."/>
            <person name="Miller J.R."/>
            <person name="Flanigan M.J."/>
            <person name="Edwards N.J."/>
            <person name="Bolanos R."/>
            <person name="Fasulo D."/>
            <person name="Halldorsson B.V."/>
            <person name="Hannenhalli S."/>
            <person name="Turner R."/>
            <person name="Yooseph S."/>
            <person name="Lu F."/>
            <person name="Nusskern D.R."/>
            <person name="Shue B.C."/>
            <person name="Zheng X.H."/>
            <person name="Zhong F."/>
            <person name="Delcher A.L."/>
            <person name="Huson D.H."/>
            <person name="Kravitz S.A."/>
            <person name="Mouchard L."/>
            <person name="Reinert K."/>
            <person name="Remington K.A."/>
            <person name="Clark A.G."/>
            <person name="Waterman M.S."/>
            <person name="Eichler E.E."/>
            <person name="Adams M.D."/>
            <person name="Hunkapiller M.W."/>
            <person name="Myers E.W."/>
            <person name="Venter J.C."/>
        </authorList>
    </citation>
    <scope>NUCLEOTIDE SEQUENCE [LARGE SCALE GENOMIC DNA]</scope>
</reference>
<reference key="5">
    <citation type="journal article" date="2008" name="Proc. Natl. Acad. Sci. U.S.A.">
        <title>A quantitative atlas of mitotic phosphorylation.</title>
        <authorList>
            <person name="Dephoure N."/>
            <person name="Zhou C."/>
            <person name="Villen J."/>
            <person name="Beausoleil S.A."/>
            <person name="Bakalarski C.E."/>
            <person name="Elledge S.J."/>
            <person name="Gygi S.P."/>
        </authorList>
    </citation>
    <scope>IDENTIFICATION BY MASS SPECTROMETRY [LARGE SCALE ANALYSIS]</scope>
    <source>
        <tissue>Cervix carcinoma</tissue>
    </source>
</reference>
<reference key="6">
    <citation type="journal article" date="2019" name="Genet. Med.">
        <title>Autozygome and high throughput confirmation of disease genes candidacy.</title>
        <authorList>
            <person name="Maddirevula S."/>
            <person name="Alzahrani F."/>
            <person name="Al-Owain M."/>
            <person name="Al Muhaizea M.A."/>
            <person name="Kayyali H.R."/>
            <person name="AlHashem A."/>
            <person name="Rahbeeni Z."/>
            <person name="Al-Otaibi M."/>
            <person name="Alzaidan H.I."/>
            <person name="Balobaid A."/>
            <person name="El Khashab H.Y."/>
            <person name="Bubshait D.K."/>
            <person name="Faden M."/>
            <person name="Yamani S.A."/>
            <person name="Dabbagh O."/>
            <person name="Al-Mureikhi M."/>
            <person name="Jasser A.A."/>
            <person name="Alsaif H.S."/>
            <person name="Alluhaydan I."/>
            <person name="Seidahmed M.Z."/>
            <person name="Alabbasi B.H."/>
            <person name="Almogarri I."/>
            <person name="Kurdi W."/>
            <person name="Akleh H."/>
            <person name="Qari A."/>
            <person name="Al Tala S.M."/>
            <person name="Alhomaidi S."/>
            <person name="Kentab A.Y."/>
            <person name="Salih M.A."/>
            <person name="Chedrawi A."/>
            <person name="Alameer S."/>
            <person name="Tabarki B."/>
            <person name="Shamseldin H.E."/>
            <person name="Patel N."/>
            <person name="Ibrahim N."/>
            <person name="Abdulwahab F."/>
            <person name="Samira M."/>
            <person name="Goljan E."/>
            <person name="Abouelhoda M."/>
            <person name="Meyer B.F."/>
            <person name="Hashem M."/>
            <person name="Shaheen R."/>
            <person name="AlShahwan S."/>
            <person name="Alfadhel M."/>
            <person name="Ben-Omran T."/>
            <person name="Al-Qattan M.M."/>
            <person name="Monies D."/>
            <person name="Alkuraya F.S."/>
        </authorList>
    </citation>
    <scope>VARIANT TRP-123</scope>
</reference>
<feature type="chain" id="PRO_0000262954" description="Diencephalon/mesencephalon homeobox protein 1">
    <location>
        <begin position="1"/>
        <end position="382"/>
    </location>
</feature>
<feature type="DNA-binding region" description="Homeobox" evidence="4">
    <location>
        <begin position="71"/>
        <end position="130"/>
    </location>
</feature>
<feature type="region of interest" description="Interaction with OTX2 and is required for repressor activity" evidence="3">
    <location>
        <begin position="1"/>
        <end position="156"/>
    </location>
</feature>
<feature type="region of interest" description="Disordered" evidence="6">
    <location>
        <begin position="128"/>
        <end position="252"/>
    </location>
</feature>
<feature type="short sequence motif" description="OAR" evidence="5">
    <location>
        <begin position="359"/>
        <end position="372"/>
    </location>
</feature>
<feature type="compositionally biased region" description="Basic and acidic residues" evidence="6">
    <location>
        <begin position="133"/>
        <end position="153"/>
    </location>
</feature>
<feature type="compositionally biased region" description="Low complexity" evidence="6">
    <location>
        <begin position="178"/>
        <end position="191"/>
    </location>
</feature>
<feature type="compositionally biased region" description="Basic and acidic residues" evidence="6">
    <location>
        <begin position="201"/>
        <end position="216"/>
    </location>
</feature>
<feature type="splice variant" id="VSP_052251" description="In isoform 2." evidence="10 11">
    <location>
        <begin position="52"/>
        <end position="56"/>
    </location>
</feature>
<feature type="sequence variant" id="VAR_082142" description="Found in a patient with global delayed development; uncertain significance; dbSNP:rs730882203." evidence="9">
    <original>R</original>
    <variation>W</variation>
    <location>
        <position position="123"/>
    </location>
</feature>
<feature type="sequence variant" id="VAR_049578" description="In dbSNP:rs34614765.">
    <original>A</original>
    <variation>P</variation>
    <location>
        <position position="205"/>
    </location>
</feature>
<feature type="sequence conflict" description="In Ref. 2; BAC00920." evidence="12" ref="2">
    <original>R</original>
    <variation>K</variation>
    <location>
        <position position="227"/>
    </location>
</feature>
<dbReference type="EMBL" id="AF398527">
    <property type="protein sequence ID" value="AAM90589.1"/>
    <property type="molecule type" value="mRNA"/>
</dbReference>
<dbReference type="EMBL" id="AF398528">
    <property type="protein sequence ID" value="AAM90590.1"/>
    <property type="molecule type" value="mRNA"/>
</dbReference>
<dbReference type="EMBL" id="AB037699">
    <property type="protein sequence ID" value="BAC00920.1"/>
    <property type="status" value="ALT_INIT"/>
    <property type="molecule type" value="mRNA"/>
</dbReference>
<dbReference type="EMBL" id="AL137797">
    <property type="status" value="NOT_ANNOTATED_CDS"/>
    <property type="molecule type" value="Genomic_DNA"/>
</dbReference>
<dbReference type="EMBL" id="CH471059">
    <property type="protein sequence ID" value="EAX06907.1"/>
    <property type="molecule type" value="Genomic_DNA"/>
</dbReference>
<dbReference type="CCDS" id="CCDS536.1">
    <molecule id="Q8NFW5-2"/>
</dbReference>
<dbReference type="CCDS" id="CCDS90942.1">
    <molecule id="Q8NFW5-1"/>
</dbReference>
<dbReference type="RefSeq" id="NP_001374704.1">
    <molecule id="Q8NFW5-2"/>
    <property type="nucleotide sequence ID" value="NM_001387775.1"/>
</dbReference>
<dbReference type="RefSeq" id="NP_001374705.1">
    <molecule id="Q8NFW5-1"/>
    <property type="nucleotide sequence ID" value="NM_001387776.1"/>
</dbReference>
<dbReference type="RefSeq" id="NP_671725.1">
    <molecule id="Q8NFW5-1"/>
    <property type="nucleotide sequence ID" value="NM_147192.4"/>
</dbReference>
<dbReference type="RefSeq" id="NP_757379.1">
    <molecule id="Q8NFW5-2"/>
    <property type="nucleotide sequence ID" value="NM_172225.2"/>
</dbReference>
<dbReference type="RefSeq" id="XP_011538970.1">
    <property type="nucleotide sequence ID" value="XM_011540668.2"/>
</dbReference>
<dbReference type="RefSeq" id="XP_016855778.1">
    <property type="nucleotide sequence ID" value="XM_017000289.1"/>
</dbReference>
<dbReference type="SMR" id="Q8NFW5"/>
<dbReference type="BioGRID" id="126053">
    <property type="interactions" value="2"/>
</dbReference>
<dbReference type="FunCoup" id="Q8NFW5">
    <property type="interactions" value="241"/>
</dbReference>
<dbReference type="IntAct" id="Q8NFW5">
    <property type="interactions" value="1"/>
</dbReference>
<dbReference type="STRING" id="9606.ENSP00000353132"/>
<dbReference type="GlyGen" id="Q8NFW5">
    <property type="glycosylation" value="2 sites, 1 O-linked glycan (1 site)"/>
</dbReference>
<dbReference type="iPTMnet" id="Q8NFW5"/>
<dbReference type="PhosphoSitePlus" id="Q8NFW5"/>
<dbReference type="BioMuta" id="DMBX1"/>
<dbReference type="DMDM" id="74762571"/>
<dbReference type="jPOST" id="Q8NFW5"/>
<dbReference type="MassIVE" id="Q8NFW5"/>
<dbReference type="PaxDb" id="9606-ENSP00000353132"/>
<dbReference type="PeptideAtlas" id="Q8NFW5"/>
<dbReference type="ProteomicsDB" id="73373">
    <molecule id="Q8NFW5-1"/>
</dbReference>
<dbReference type="ProteomicsDB" id="73374">
    <molecule id="Q8NFW5-2"/>
</dbReference>
<dbReference type="Antibodypedia" id="32805">
    <property type="antibodies" value="84 antibodies from 17 providers"/>
</dbReference>
<dbReference type="DNASU" id="127343"/>
<dbReference type="Ensembl" id="ENST00000360032.4">
    <molecule id="Q8NFW5-2"/>
    <property type="protein sequence ID" value="ENSP00000353132.3"/>
    <property type="gene ID" value="ENSG00000197587.12"/>
</dbReference>
<dbReference type="GeneID" id="127343"/>
<dbReference type="KEGG" id="hsa:127343"/>
<dbReference type="MANE-Select" id="ENST00000360032.4">
    <molecule id="Q8NFW5-2"/>
    <property type="protein sequence ID" value="ENSP00000353132.3"/>
    <property type="RefSeq nucleotide sequence ID" value="NM_172225.2"/>
    <property type="RefSeq protein sequence ID" value="NP_757379.1"/>
</dbReference>
<dbReference type="UCSC" id="uc001cpw.4">
    <molecule id="Q8NFW5-1"/>
    <property type="organism name" value="human"/>
</dbReference>
<dbReference type="AGR" id="HGNC:19026"/>
<dbReference type="CTD" id="127343"/>
<dbReference type="DisGeNET" id="127343"/>
<dbReference type="GeneCards" id="DMBX1"/>
<dbReference type="HGNC" id="HGNC:19026">
    <property type="gene designation" value="DMBX1"/>
</dbReference>
<dbReference type="HPA" id="ENSG00000197587">
    <property type="expression patterns" value="Not detected"/>
</dbReference>
<dbReference type="MalaCards" id="DMBX1"/>
<dbReference type="MIM" id="607410">
    <property type="type" value="gene"/>
</dbReference>
<dbReference type="neXtProt" id="NX_Q8NFW5"/>
<dbReference type="OpenTargets" id="ENSG00000197587"/>
<dbReference type="PharmGKB" id="PA38780"/>
<dbReference type="VEuPathDB" id="HostDB:ENSG00000197587"/>
<dbReference type="eggNOG" id="KOG0490">
    <property type="taxonomic scope" value="Eukaryota"/>
</dbReference>
<dbReference type="GeneTree" id="ENSGT00940000155505"/>
<dbReference type="HOGENOM" id="CLU_060969_0_0_1"/>
<dbReference type="InParanoid" id="Q8NFW5"/>
<dbReference type="OMA" id="NSLNAMY"/>
<dbReference type="OrthoDB" id="6159439at2759"/>
<dbReference type="PAN-GO" id="Q8NFW5">
    <property type="GO annotations" value="3 GO annotations based on evolutionary models"/>
</dbReference>
<dbReference type="PhylomeDB" id="Q8NFW5"/>
<dbReference type="TreeFam" id="TF351609"/>
<dbReference type="PathwayCommons" id="Q8NFW5"/>
<dbReference type="SignaLink" id="Q8NFW5"/>
<dbReference type="BioGRID-ORCS" id="127343">
    <property type="hits" value="14 hits in 1175 CRISPR screens"/>
</dbReference>
<dbReference type="GenomeRNAi" id="127343"/>
<dbReference type="Pharos" id="Q8NFW5">
    <property type="development level" value="Tbio"/>
</dbReference>
<dbReference type="PRO" id="PR:Q8NFW5"/>
<dbReference type="Proteomes" id="UP000005640">
    <property type="component" value="Chromosome 1"/>
</dbReference>
<dbReference type="RNAct" id="Q8NFW5">
    <property type="molecule type" value="protein"/>
</dbReference>
<dbReference type="Bgee" id="ENSG00000197587">
    <property type="expression patterns" value="Expressed in male germ line stem cell (sensu Vertebrata) in testis and 28 other cell types or tissues"/>
</dbReference>
<dbReference type="GO" id="GO:0000785">
    <property type="term" value="C:chromatin"/>
    <property type="evidence" value="ECO:0000247"/>
    <property type="project" value="NTNU_SB"/>
</dbReference>
<dbReference type="GO" id="GO:0005634">
    <property type="term" value="C:nucleus"/>
    <property type="evidence" value="ECO:0007669"/>
    <property type="project" value="UniProtKB-SubCell"/>
</dbReference>
<dbReference type="GO" id="GO:0005667">
    <property type="term" value="C:transcription regulator complex"/>
    <property type="evidence" value="ECO:0007669"/>
    <property type="project" value="Ensembl"/>
</dbReference>
<dbReference type="GO" id="GO:0003677">
    <property type="term" value="F:DNA binding"/>
    <property type="evidence" value="ECO:0000250"/>
    <property type="project" value="UniProtKB"/>
</dbReference>
<dbReference type="GO" id="GO:0003700">
    <property type="term" value="F:DNA-binding transcription factor activity"/>
    <property type="evidence" value="ECO:0000250"/>
    <property type="project" value="UniProtKB"/>
</dbReference>
<dbReference type="GO" id="GO:0000981">
    <property type="term" value="F:DNA-binding transcription factor activity, RNA polymerase II-specific"/>
    <property type="evidence" value="ECO:0000247"/>
    <property type="project" value="NTNU_SB"/>
</dbReference>
<dbReference type="GO" id="GO:0001227">
    <property type="term" value="F:DNA-binding transcription repressor activity, RNA polymerase II-specific"/>
    <property type="evidence" value="ECO:0007669"/>
    <property type="project" value="Ensembl"/>
</dbReference>
<dbReference type="GO" id="GO:0042802">
    <property type="term" value="F:identical protein binding"/>
    <property type="evidence" value="ECO:0007669"/>
    <property type="project" value="Ensembl"/>
</dbReference>
<dbReference type="GO" id="GO:0000977">
    <property type="term" value="F:RNA polymerase II transcription regulatory region sequence-specific DNA binding"/>
    <property type="evidence" value="ECO:0000318"/>
    <property type="project" value="GO_Central"/>
</dbReference>
<dbReference type="GO" id="GO:0043565">
    <property type="term" value="F:sequence-specific DNA binding"/>
    <property type="evidence" value="ECO:0000250"/>
    <property type="project" value="UniProtKB"/>
</dbReference>
<dbReference type="GO" id="GO:1990837">
    <property type="term" value="F:sequence-specific double-stranded DNA binding"/>
    <property type="evidence" value="ECO:0000314"/>
    <property type="project" value="ARUK-UCL"/>
</dbReference>
<dbReference type="GO" id="GO:0008343">
    <property type="term" value="P:adult feeding behavior"/>
    <property type="evidence" value="ECO:0007669"/>
    <property type="project" value="Ensembl"/>
</dbReference>
<dbReference type="GO" id="GO:0008344">
    <property type="term" value="P:adult locomotory behavior"/>
    <property type="evidence" value="ECO:0007669"/>
    <property type="project" value="Ensembl"/>
</dbReference>
<dbReference type="GO" id="GO:0007420">
    <property type="term" value="P:brain development"/>
    <property type="evidence" value="ECO:0000250"/>
    <property type="project" value="UniProtKB"/>
</dbReference>
<dbReference type="GO" id="GO:0007417">
    <property type="term" value="P:central nervous system development"/>
    <property type="evidence" value="ECO:0000250"/>
    <property type="project" value="UniProtKB"/>
</dbReference>
<dbReference type="GO" id="GO:0048589">
    <property type="term" value="P:developmental growth"/>
    <property type="evidence" value="ECO:0000250"/>
    <property type="project" value="UniProtKB"/>
</dbReference>
<dbReference type="GO" id="GO:0045892">
    <property type="term" value="P:negative regulation of DNA-templated transcription"/>
    <property type="evidence" value="ECO:0000250"/>
    <property type="project" value="UniProtKB"/>
</dbReference>
<dbReference type="GO" id="GO:0006357">
    <property type="term" value="P:regulation of transcription by RNA polymerase II"/>
    <property type="evidence" value="ECO:0000318"/>
    <property type="project" value="GO_Central"/>
</dbReference>
<dbReference type="CDD" id="cd00086">
    <property type="entry name" value="homeodomain"/>
    <property type="match status" value="1"/>
</dbReference>
<dbReference type="FunFam" id="1.10.10.60:FF:000125">
    <property type="entry name" value="diencephalon/mesencephalon homeobox protein 1"/>
    <property type="match status" value="1"/>
</dbReference>
<dbReference type="Gene3D" id="1.10.10.60">
    <property type="entry name" value="Homeodomain-like"/>
    <property type="match status" value="1"/>
</dbReference>
<dbReference type="InterPro" id="IPR052488">
    <property type="entry name" value="DMBX_homeobox"/>
</dbReference>
<dbReference type="InterPro" id="IPR001356">
    <property type="entry name" value="HD"/>
</dbReference>
<dbReference type="InterPro" id="IPR017970">
    <property type="entry name" value="Homeobox_CS"/>
</dbReference>
<dbReference type="InterPro" id="IPR009057">
    <property type="entry name" value="Homeodomain-like_sf"/>
</dbReference>
<dbReference type="InterPro" id="IPR003654">
    <property type="entry name" value="OAR_dom"/>
</dbReference>
<dbReference type="PANTHER" id="PTHR46639">
    <property type="entry name" value="DIENCEPHALON/MESENCEPHALON HOMEOBOX PROTEIN 1"/>
    <property type="match status" value="1"/>
</dbReference>
<dbReference type="PANTHER" id="PTHR46639:SF2">
    <property type="entry name" value="DIENCEPHALON_MESENCEPHALON HOMEOBOX PROTEIN 1"/>
    <property type="match status" value="1"/>
</dbReference>
<dbReference type="Pfam" id="PF00046">
    <property type="entry name" value="Homeodomain"/>
    <property type="match status" value="1"/>
</dbReference>
<dbReference type="Pfam" id="PF03826">
    <property type="entry name" value="OAR"/>
    <property type="match status" value="1"/>
</dbReference>
<dbReference type="SMART" id="SM00389">
    <property type="entry name" value="HOX"/>
    <property type="match status" value="1"/>
</dbReference>
<dbReference type="SUPFAM" id="SSF46689">
    <property type="entry name" value="Homeodomain-like"/>
    <property type="match status" value="1"/>
</dbReference>
<dbReference type="PROSITE" id="PS00027">
    <property type="entry name" value="HOMEOBOX_1"/>
    <property type="match status" value="1"/>
</dbReference>
<dbReference type="PROSITE" id="PS50071">
    <property type="entry name" value="HOMEOBOX_2"/>
    <property type="match status" value="1"/>
</dbReference>
<dbReference type="PROSITE" id="PS50803">
    <property type="entry name" value="OAR"/>
    <property type="match status" value="1"/>
</dbReference>
<evidence type="ECO:0000250" key="1"/>
<evidence type="ECO:0000250" key="2">
    <source>
        <dbReference type="UniProtKB" id="O35137"/>
    </source>
</evidence>
<evidence type="ECO:0000250" key="3">
    <source>
        <dbReference type="UniProtKB" id="Q91ZK4"/>
    </source>
</evidence>
<evidence type="ECO:0000255" key="4">
    <source>
        <dbReference type="PROSITE-ProRule" id="PRU00108"/>
    </source>
</evidence>
<evidence type="ECO:0000255" key="5">
    <source>
        <dbReference type="PROSITE-ProRule" id="PRU00138"/>
    </source>
</evidence>
<evidence type="ECO:0000256" key="6">
    <source>
        <dbReference type="SAM" id="MobiDB-lite"/>
    </source>
</evidence>
<evidence type="ECO:0000269" key="7">
    <source>
    </source>
</evidence>
<evidence type="ECO:0000269" key="8">
    <source>
    </source>
</evidence>
<evidence type="ECO:0000269" key="9">
    <source>
    </source>
</evidence>
<evidence type="ECO:0000303" key="10">
    <source>
    </source>
</evidence>
<evidence type="ECO:0000303" key="11">
    <source>
    </source>
</evidence>
<evidence type="ECO:0000305" key="12"/>
<evidence type="ECO:0000312" key="13">
    <source>
        <dbReference type="EMBL" id="AAM90589.1"/>
    </source>
</evidence>
<evidence type="ECO:0000312" key="14">
    <source>
        <dbReference type="EMBL" id="AAM90590.1"/>
    </source>
</evidence>
<evidence type="ECO:0000312" key="15">
    <source>
        <dbReference type="EMBL" id="AL137797"/>
    </source>
</evidence>
<evidence type="ECO:0000312" key="16">
    <source>
        <dbReference type="EMBL" id="BAC00920.1"/>
    </source>
</evidence>
<evidence type="ECO:0000312" key="17">
    <source>
        <dbReference type="HGNC" id="HGNC:19026"/>
    </source>
</evidence>
<accession>Q8NFW5</accession>
<accession>A6NNN2</accession>
<accession>Q8NFW6</accession>
<accession>Q8NHD9</accession>
<organism>
    <name type="scientific">Homo sapiens</name>
    <name type="common">Human</name>
    <dbReference type="NCBI Taxonomy" id="9606"/>
    <lineage>
        <taxon>Eukaryota</taxon>
        <taxon>Metazoa</taxon>
        <taxon>Chordata</taxon>
        <taxon>Craniata</taxon>
        <taxon>Vertebrata</taxon>
        <taxon>Euteleostomi</taxon>
        <taxon>Mammalia</taxon>
        <taxon>Eutheria</taxon>
        <taxon>Euarchontoglires</taxon>
        <taxon>Primates</taxon>
        <taxon>Haplorrhini</taxon>
        <taxon>Catarrhini</taxon>
        <taxon>Hominidae</taxon>
        <taxon>Homo</taxon>
    </lineage>
</organism>
<keyword id="KW-0025">Alternative splicing</keyword>
<keyword id="KW-0217">Developmental protein</keyword>
<keyword id="KW-0238">DNA-binding</keyword>
<keyword id="KW-0371">Homeobox</keyword>
<keyword id="KW-0539">Nucleus</keyword>
<keyword id="KW-1267">Proteomics identification</keyword>
<keyword id="KW-1185">Reference proteome</keyword>
<keyword id="KW-0678">Repressor</keyword>
<keyword id="KW-0804">Transcription</keyword>
<keyword id="KW-0805">Transcription regulation</keyword>
<protein>
    <recommendedName>
        <fullName>Diencephalon/mesencephalon homeobox protein 1</fullName>
    </recommendedName>
    <alternativeName>
        <fullName>Orthodenticle homolog 3</fullName>
    </alternativeName>
    <alternativeName>
        <fullName>Paired-like homeobox protein DMBX1</fullName>
    </alternativeName>
</protein>
<name>DMBX1_HUMAN</name>
<sequence length="382" mass="41198">MQHYGVNGYSLHAMNSLSAMYNLHQQAAQQAQHAPDYRPSVHALTLAERLAGCTFQDIILEARYGSQHRKQRRSRTAFTAQQLEALEKTFQKTHYPDVVMRERLAMCTNLPEARVQVWFKNRRAKFRKKQRSLQKEQLQKQKEAEGSHGEGKAEAPTPDTQLDTEQPPRLPGSDPPAELHLSLSEQSASESAPEDQPDREEDPRAGAEDPKAEKSPGADSKGLGCKRGSPKADSPGSLTITPVAPGGGLLGPSHSYSSSPLSLFRLQEQFRQHMAATNNLVHYSSFEVGGPAPAAAAAAAAVPYLGVNMAPLGSLHCQSYYQSLSAAAAAHQGVWGSPLLPAPPAGLAPASATLNSKTTSIENLRLRAKQHAASLGLDTLPN</sequence>